<proteinExistence type="evidence at protein level"/>
<comment type="function">
    <text evidence="4 5 6">Lanthionine-containing peptide antibiotic (lantibiotic) active on Gram-positive bacteria including M.luteus, S.aureus, Streptococcus, P.micros, P.acidilactici, C.sporogenes, C.diphtheriae, A.viscosus, G.vaginalis, P.acnes, L.monocytogenes and M.smegmatis, and Gram-negative bacteria including C.jejuni, H.pylori and N.gonorrhoeae. Transiently and partially depolarizes the transmembrane electrical potential and pH gradient of susceptible cells, inhibits the uptake of amino acids and depletes the intracellular ATP pool.</text>
</comment>
<comment type="biophysicochemical properties">
    <phDependence>
        <text evidence="4 5">Stable from pH 2.0 to 4.0. Activity decreases gradually with increasing pH.</text>
    </phDependence>
    <temperatureDependence>
        <text evidence="4 5">Thermostable.</text>
    </temperatureDependence>
</comment>
<comment type="PTM">
    <text evidence="9">Maturation of lantibiotics involves the enzymatic conversion of Thr, and Ser into dehydrated AA and the formation of thioether bonds with cysteine. This is followed by membrane translocation and cleavage of the modified precursor.</text>
</comment>
<comment type="PTM">
    <text>It is not established whether the 2,3-didehydrobutyrine is the E- or Z-isomer (PubMed:10821848, PubMed:16626493, PubMed:8021218, PubMed:8660519, PubMed:9647795).</text>
</comment>
<comment type="mass spectrometry" mass="3244.64" error="1.15" method="Electrospray" evidence="5"/>
<comment type="mass spectrometry" mass="3245.4" error="0.58" method="Electrospray" evidence="7"/>
<comment type="mass spectrometry" mass="3246.08" error="0.1" method="MALDI" evidence="4"/>
<comment type="similarity">
    <text evidence="1">Belongs to the type A lantibiotic family.</text>
</comment>
<organism>
    <name type="scientific">Streptococcus mutans</name>
    <dbReference type="NCBI Taxonomy" id="1309"/>
    <lineage>
        <taxon>Bacteria</taxon>
        <taxon>Bacillati</taxon>
        <taxon>Bacillota</taxon>
        <taxon>Bacilli</taxon>
        <taxon>Lactobacillales</taxon>
        <taxon>Streptococcaceae</taxon>
        <taxon>Streptococcus</taxon>
    </lineage>
</organism>
<reference evidence="10" key="1">
    <citation type="journal article" date="1998" name="Gene">
        <title>Sequence analysis of mutA and mutM genes involved in the biosynthesis of the lantibiotic mutacin II in Streptococcus mutans.</title>
        <authorList>
            <person name="Woodruff W.A."/>
            <person name="Novak J."/>
            <person name="Caufield P.W."/>
        </authorList>
    </citation>
    <scope>NUCLEOTIDE SEQUENCE [GENOMIC DNA]</scope>
    <source>
        <strain evidence="10">T8</strain>
    </source>
</reference>
<reference evidence="9" key="2">
    <citation type="journal article" date="2000" name="J. Biol. Chem.">
        <title>Biochemical structural analysis of the lantibiotic mutacin II.</title>
        <authorList>
            <person name="Krull R.E."/>
            <person name="Chen P."/>
            <person name="Novak J."/>
            <person name="Kirk M."/>
            <person name="Barnes S."/>
            <person name="Baker J."/>
            <person name="Krishna N.R."/>
            <person name="Caufield P.W."/>
        </authorList>
    </citation>
    <scope>PROTEIN SEQUENCE OF 27-50</scope>
    <scope>DEHYDRATION AT THR-51</scope>
    <scope>LANTHIONINE CROSS-LINKS</scope>
    <scope>MUTAGENESIS OF CYS-41 AND CYS-52</scope>
    <source>
        <strain evidence="2">T8</strain>
    </source>
</reference>
<reference key="3">
    <citation type="journal article" date="2006" name="BMC Microbiol.">
        <title>Mutacin H-29B is identical to mutacin II (J-T8).</title>
        <authorList>
            <person name="Nicolas G."/>
            <person name="Morency H."/>
            <person name="LaPointe G."/>
            <person name="Lavoie M.C."/>
        </authorList>
    </citation>
    <scope>PROTEIN SEQUENCE OF 27-50</scope>
    <scope>FUNCTION</scope>
    <scope>BIOPHYSICOCHEMICAL PROPERTIES</scope>
    <scope>MASS SPECTROMETRY</scope>
    <scope>POST-TRANSLATIONAL MODIFICATIONS</scope>
    <source>
        <strain>29B</strain>
    </source>
</reference>
<reference evidence="9" key="4">
    <citation type="journal article" date="1998" name="Appl. Environ. Microbiol.">
        <title>Structure-activity study of the lantibiotic mutacin II from Streptococcus mutans T8 by a gene replacement strategy.</title>
        <authorList>
            <person name="Chen P."/>
            <person name="Novak J."/>
            <person name="Kirk M."/>
            <person name="Barnes S."/>
            <person name="Qi F."/>
            <person name="Caufield P.W."/>
        </authorList>
    </citation>
    <scope>PROTEIN SEQUENCE OF 27-37</scope>
    <scope>POST-TRANSLATIONAL MODIFICATIONS</scope>
    <scope>MUTAGENESIS OF ASN-27; VAL-33; PRO-35; THR-36; CYS-41; CYS-52 AND CYS-53</scope>
    <source>
        <strain evidence="8">T8</strain>
    </source>
</reference>
<reference evidence="9" key="5">
    <citation type="journal article" date="1994" name="J. Bacteriol.">
        <title>Isolation and biochemical characterization of a novel lantibiotic mutacin from Streptococcus mutans.</title>
        <authorList>
            <person name="Novak J."/>
            <person name="Caufield P.W."/>
            <person name="Miller E.J."/>
        </authorList>
    </citation>
    <scope>PROTEIN SEQUENCE OF 27-34</scope>
    <scope>FUNCTION</scope>
    <scope>POST-TRANSLATIONAL MODIFICATIONS</scope>
    <scope>MASS SPECTROMETRY</scope>
    <scope>BIOPHYSICOCHEMICAL PROPERTIES</scope>
    <source>
        <strain evidence="5">T8</strain>
    </source>
</reference>
<reference evidence="9" key="6">
    <citation type="journal article" date="1995" name="Antimicrob. Agents Chemother.">
        <title>Mutacin II, a bactericidal lantibiotic from Streptococcus mutans.</title>
        <authorList>
            <person name="Chikindas M.L."/>
            <person name="Novak J."/>
            <person name="Driessen A.J.M."/>
            <person name="Konings W.N."/>
            <person name="Schilling K.M."/>
            <person name="Caufield P.W."/>
        </authorList>
    </citation>
    <scope>FUNCTION</scope>
    <source>
        <strain evidence="6">T8</strain>
    </source>
</reference>
<reference evidence="9" key="7">
    <citation type="journal article" date="1996" name="Anal. Biochem.">
        <title>Detection of modified amino acids in lantibiotic peptide mutacin II by chemical derivation and electrospray ionization-mass spectroscopic analysis.</title>
        <authorList>
            <person name="Novak J."/>
            <person name="Kirk M."/>
            <person name="Caufield P.W."/>
            <person name="Barnes S."/>
            <person name="Morrison K."/>
            <person name="Baker J."/>
        </authorList>
    </citation>
    <scope>POST-TRANSLATIONAL MODIFICATIONS</scope>
    <scope>MASS SPECTROMETRY</scope>
    <source>
        <strain evidence="7">T8</strain>
    </source>
</reference>
<reference evidence="9" key="8">
    <citation type="journal article" date="2001" name="FEMS Microbiol. Lett.">
        <title>Effect of amino acid substitutions in conserved residues in the leader peptide on biosynthesis of the lantibiotic mutacin II.</title>
        <authorList>
            <person name="Chen P."/>
            <person name="Qi F."/>
            <person name="Novak J."/>
            <person name="Krull R.E."/>
            <person name="Caufield P.W."/>
        </authorList>
    </citation>
    <scope>MUTAGENESIS OF GLU-14; VAL-15; SER-16; GLU-19; LEU-20; ILE-23; GLY-25 AND GLY-26</scope>
    <source>
        <strain evidence="3">T8</strain>
    </source>
</reference>
<name>LANA_STRMG</name>
<dbReference type="EMBL" id="U40620">
    <property type="protein sequence ID" value="AAC38144.1"/>
    <property type="molecule type" value="Genomic_DNA"/>
</dbReference>
<dbReference type="PIR" id="JC6526">
    <property type="entry name" value="JC6526"/>
</dbReference>
<dbReference type="TCDB" id="1.C.21.1.10">
    <property type="family name" value="the lacticin 481 (lacticin 481) family"/>
</dbReference>
<dbReference type="GO" id="GO:0005576">
    <property type="term" value="C:extracellular region"/>
    <property type="evidence" value="ECO:0000305"/>
    <property type="project" value="UniProtKB"/>
</dbReference>
<dbReference type="GO" id="GO:0005102">
    <property type="term" value="F:signaling receptor binding"/>
    <property type="evidence" value="ECO:0007669"/>
    <property type="project" value="UniProtKB-KW"/>
</dbReference>
<dbReference type="GO" id="GO:0006865">
    <property type="term" value="P:amino acid transport"/>
    <property type="evidence" value="ECO:0000314"/>
    <property type="project" value="UniProtKB"/>
</dbReference>
<dbReference type="GO" id="GO:0050829">
    <property type="term" value="P:defense response to Gram-negative bacterium"/>
    <property type="evidence" value="ECO:0000314"/>
    <property type="project" value="UniProtKB"/>
</dbReference>
<dbReference type="GO" id="GO:0050830">
    <property type="term" value="P:defense response to Gram-positive bacterium"/>
    <property type="evidence" value="ECO:0000314"/>
    <property type="project" value="UniProtKB"/>
</dbReference>
<dbReference type="GO" id="GO:0031640">
    <property type="term" value="P:killing of cells of another organism"/>
    <property type="evidence" value="ECO:0007669"/>
    <property type="project" value="UniProtKB-KW"/>
</dbReference>
<dbReference type="GO" id="GO:0042391">
    <property type="term" value="P:regulation of membrane potential"/>
    <property type="evidence" value="ECO:0000314"/>
    <property type="project" value="UniProtKB"/>
</dbReference>
<dbReference type="InterPro" id="IPR007682">
    <property type="entry name" value="Lantibiotic_typ-A_Lactobact"/>
</dbReference>
<dbReference type="NCBIfam" id="NF040664">
    <property type="entry name" value="HEC_x9_TCC_lant"/>
    <property type="match status" value="1"/>
</dbReference>
<dbReference type="Pfam" id="PF04604">
    <property type="entry name" value="L_biotic_typeA"/>
    <property type="match status" value="1"/>
</dbReference>
<gene>
    <name evidence="10" type="primary">mutA</name>
</gene>
<keyword id="KW-0044">Antibiotic</keyword>
<keyword id="KW-0929">Antimicrobial</keyword>
<keyword id="KW-0078">Bacteriocin</keyword>
<keyword id="KW-0903">Direct protein sequencing</keyword>
<keyword id="KW-0425">Lantibiotic</keyword>
<keyword id="KW-0883">Thioether bond</keyword>
<protein>
    <recommendedName>
        <fullName>Lantibiotic mutacin-2</fullName>
    </recommendedName>
    <alternativeName>
        <fullName>Lantibiotic mutacin H-29B</fullName>
    </alternativeName>
    <alternativeName>
        <fullName>Mutacin II</fullName>
    </alternativeName>
</protein>
<sequence length="53" mass="6020">MNKLNSNAVVSLNEVSDSELDTILGGNRWWQGVVPTVSYECRMNSWQHVFTCC</sequence>
<feature type="propeptide" id="PRO_0000017128" evidence="2 4 5 8">
    <location>
        <begin position="1"/>
        <end position="26"/>
    </location>
</feature>
<feature type="peptide" id="PRO_0000017129" description="Lantibiotic mutacin-2">
    <location>
        <begin position="27"/>
        <end position="53"/>
    </location>
</feature>
<feature type="modified residue" description="2,3-didehydrobutyrine" evidence="2">
    <location>
        <position position="51"/>
    </location>
</feature>
<feature type="cross-link" description="Beta-methyllanthionine (Thr-Cys)" evidence="2">
    <location>
        <begin position="36"/>
        <end position="41"/>
    </location>
</feature>
<feature type="cross-link" description="Lanthionine (Ser-Cys)" evidence="2">
    <location>
        <begin position="38"/>
        <end position="52"/>
    </location>
</feature>
<feature type="cross-link" description="Lanthionine (Ser-Cys)" evidence="2">
    <location>
        <begin position="45"/>
        <end position="53"/>
    </location>
</feature>
<feature type="mutagenesis site" description="No loss of activity or protein production." evidence="3">
    <original>E</original>
    <variation>D</variation>
    <location>
        <position position="14"/>
    </location>
</feature>
<feature type="mutagenesis site" description="Reduced protein production to about 10% of wild-type level." evidence="3">
    <original>E</original>
    <variation>K</variation>
    <location>
        <position position="14"/>
    </location>
</feature>
<feature type="mutagenesis site" description="No loss of activity or protein production." evidence="3">
    <original>V</original>
    <variation>I</variation>
    <variation>A</variation>
    <location>
        <position position="15"/>
    </location>
</feature>
<feature type="mutagenesis site" description="Reduced protein production to about 50% of wild-type level." evidence="3">
    <original>V</original>
    <variation>L</variation>
    <location>
        <position position="15"/>
    </location>
</feature>
<feature type="mutagenesis site" description="No loss of activity or protein production." evidence="3">
    <original>S</original>
    <variation>T</variation>
    <variation>A</variation>
    <location>
        <position position="16"/>
    </location>
</feature>
<feature type="mutagenesis site" description="No loss of activity or protein production." evidence="3">
    <original>E</original>
    <variation>D</variation>
    <location>
        <position position="19"/>
    </location>
</feature>
<feature type="mutagenesis site" description="Reduced protein production to about 75% of wild-type level." evidence="3">
    <original>E</original>
    <variation>K</variation>
    <location>
        <position position="19"/>
    </location>
</feature>
<feature type="mutagenesis site" description="No mature protein is produced." evidence="3">
    <original>L</original>
    <variation>K</variation>
    <location>
        <position position="20"/>
    </location>
</feature>
<feature type="mutagenesis site" description="No loss of activity or protein production." evidence="3">
    <original>L</original>
    <variation>M</variation>
    <location>
        <position position="20"/>
    </location>
</feature>
<feature type="mutagenesis site" description="No mature protein is produced." evidence="3">
    <original>I</original>
    <variation>D</variation>
    <location>
        <position position="23"/>
    </location>
</feature>
<feature type="mutagenesis site" description="No loss of activity or protein production." evidence="3">
    <original>I</original>
    <variation>V</variation>
    <location>
        <position position="23"/>
    </location>
</feature>
<feature type="mutagenesis site" description="No mature protein is produced." evidence="3">
    <original>G</original>
    <variation>A</variation>
    <location>
        <position position="25"/>
    </location>
</feature>
<feature type="mutagenesis site" description="No mature protein is produced." evidence="3">
    <original>G</original>
    <variation>A</variation>
    <location>
        <position position="26"/>
    </location>
</feature>
<feature type="mutagenesis site" description="No protein is secreted." evidence="8">
    <location>
        <position position="27"/>
    </location>
</feature>
<feature type="mutagenesis site" description="No loss of activity." evidence="8">
    <original>V</original>
    <variation>A</variation>
    <location>
        <position position="33"/>
    </location>
</feature>
<feature type="mutagenesis site" description="Low activity, less than 10% of wild-type." evidence="8">
    <original>P</original>
    <variation>A</variation>
    <location>
        <position position="35"/>
    </location>
</feature>
<feature type="mutagenesis site" description="Loss of secretion." evidence="8">
    <original>T</original>
    <variation>A</variation>
    <location>
        <position position="36"/>
    </location>
</feature>
<feature type="mutagenesis site" description="No loss of activity." evidence="8">
    <original>T</original>
    <variation>S</variation>
    <location>
        <position position="36"/>
    </location>
</feature>
<feature type="mutagenesis site" description="Loss of activity." evidence="2 8">
    <original>C</original>
    <variation>A</variation>
    <location>
        <position position="41"/>
    </location>
</feature>
<feature type="mutagenesis site" description="Loss of activity." evidence="2 8">
    <original>C</original>
    <variation>A</variation>
    <location>
        <position position="52"/>
    </location>
</feature>
<feature type="mutagenesis site" description="Low activity, less than 10% of wild-type level." evidence="8">
    <original>C</original>
    <variation>A</variation>
    <location>
        <position position="53"/>
    </location>
</feature>
<evidence type="ECO:0000255" key="1"/>
<evidence type="ECO:0000269" key="2">
    <source>
    </source>
</evidence>
<evidence type="ECO:0000269" key="3">
    <source>
    </source>
</evidence>
<evidence type="ECO:0000269" key="4">
    <source>
    </source>
</evidence>
<evidence type="ECO:0000269" key="5">
    <source>
    </source>
</evidence>
<evidence type="ECO:0000269" key="6">
    <source>
    </source>
</evidence>
<evidence type="ECO:0000269" key="7">
    <source>
    </source>
</evidence>
<evidence type="ECO:0000269" key="8">
    <source>
    </source>
</evidence>
<evidence type="ECO:0000305" key="9"/>
<evidence type="ECO:0000312" key="10">
    <source>
        <dbReference type="EMBL" id="AAC38144.1"/>
    </source>
</evidence>
<accession>O54329</accession>
<accession>P84110</accession>